<dbReference type="EMBL" id="AJ506156">
    <property type="protein sequence ID" value="CAD45146.1"/>
    <property type="molecule type" value="Genomic_DNA"/>
</dbReference>
<dbReference type="RefSeq" id="NP_904138.1">
    <property type="nucleotide sequence ID" value="NC_005086.1"/>
</dbReference>
<dbReference type="SMR" id="Q70XX1"/>
<dbReference type="STRING" id="13333.Q70XX1"/>
<dbReference type="GeneID" id="2546580"/>
<dbReference type="KEGG" id="atr:2546580"/>
<dbReference type="OrthoDB" id="1840754at2759"/>
<dbReference type="Proteomes" id="UP000017836">
    <property type="component" value="Chloroplast"/>
</dbReference>
<dbReference type="GO" id="GO:0009507">
    <property type="term" value="C:chloroplast"/>
    <property type="evidence" value="ECO:0007669"/>
    <property type="project" value="UniProtKB-SubCell"/>
</dbReference>
<dbReference type="GO" id="GO:0015934">
    <property type="term" value="C:large ribosomal subunit"/>
    <property type="evidence" value="ECO:0000318"/>
    <property type="project" value="GO_Central"/>
</dbReference>
<dbReference type="GO" id="GO:0019843">
    <property type="term" value="F:rRNA binding"/>
    <property type="evidence" value="ECO:0007669"/>
    <property type="project" value="UniProtKB-UniRule"/>
</dbReference>
<dbReference type="GO" id="GO:0003735">
    <property type="term" value="F:structural constituent of ribosome"/>
    <property type="evidence" value="ECO:0000318"/>
    <property type="project" value="GO_Central"/>
</dbReference>
<dbReference type="GO" id="GO:0006412">
    <property type="term" value="P:translation"/>
    <property type="evidence" value="ECO:0000318"/>
    <property type="project" value="GO_Central"/>
</dbReference>
<dbReference type="CDD" id="cd00336">
    <property type="entry name" value="Ribosomal_L22"/>
    <property type="match status" value="1"/>
</dbReference>
<dbReference type="FunFam" id="3.90.470.10:FF:000006">
    <property type="entry name" value="50S ribosomal protein L22, chloroplastic"/>
    <property type="match status" value="1"/>
</dbReference>
<dbReference type="Gene3D" id="3.90.470.10">
    <property type="entry name" value="Ribosomal protein L22/L17"/>
    <property type="match status" value="1"/>
</dbReference>
<dbReference type="HAMAP" id="MF_01331_B">
    <property type="entry name" value="Ribosomal_uL22_B"/>
    <property type="match status" value="1"/>
</dbReference>
<dbReference type="InterPro" id="IPR001063">
    <property type="entry name" value="Ribosomal_uL22"/>
</dbReference>
<dbReference type="InterPro" id="IPR005727">
    <property type="entry name" value="Ribosomal_uL22_bac/chlpt-type"/>
</dbReference>
<dbReference type="InterPro" id="IPR047867">
    <property type="entry name" value="Ribosomal_uL22_bac/org-type"/>
</dbReference>
<dbReference type="InterPro" id="IPR036394">
    <property type="entry name" value="Ribosomal_uL22_sf"/>
</dbReference>
<dbReference type="NCBIfam" id="TIGR01044">
    <property type="entry name" value="rplV_bact"/>
    <property type="match status" value="1"/>
</dbReference>
<dbReference type="PANTHER" id="PTHR13501">
    <property type="entry name" value="CHLOROPLAST 50S RIBOSOMAL PROTEIN L22-RELATED"/>
    <property type="match status" value="1"/>
</dbReference>
<dbReference type="PANTHER" id="PTHR13501:SF10">
    <property type="entry name" value="LARGE RIBOSOMAL SUBUNIT PROTEIN UL22M"/>
    <property type="match status" value="1"/>
</dbReference>
<dbReference type="Pfam" id="PF00237">
    <property type="entry name" value="Ribosomal_L22"/>
    <property type="match status" value="1"/>
</dbReference>
<dbReference type="SUPFAM" id="SSF54843">
    <property type="entry name" value="Ribosomal protein L22"/>
    <property type="match status" value="1"/>
</dbReference>
<comment type="function">
    <text evidence="1">This protein binds specifically to 23S rRNA.</text>
</comment>
<comment type="function">
    <text evidence="1">The globular domain of the protein is located near the polypeptide exit tunnel on the outside of the subunit, while an extended beta-hairpin is found that lines the wall of the exit tunnel in the center of the 70S ribosome.</text>
</comment>
<comment type="subunit">
    <text evidence="1">Part of the 50S ribosomal subunit.</text>
</comment>
<comment type="subcellular location">
    <subcellularLocation>
        <location>Plastid</location>
        <location>Chloroplast</location>
    </subcellularLocation>
</comment>
<comment type="similarity">
    <text evidence="2">Belongs to the universal ribosomal protein uL22 family.</text>
</comment>
<accession>Q70XX1</accession>
<evidence type="ECO:0000250" key="1"/>
<evidence type="ECO:0000305" key="2"/>
<protein>
    <recommendedName>
        <fullName evidence="2">Large ribosomal subunit protein uL22c</fullName>
    </recommendedName>
    <alternativeName>
        <fullName>50S ribosomal protein L22, chloroplastic</fullName>
    </alternativeName>
</protein>
<proteinExistence type="inferred from homology"/>
<keyword id="KW-0150">Chloroplast</keyword>
<keyword id="KW-0934">Plastid</keyword>
<keyword id="KW-1185">Reference proteome</keyword>
<keyword id="KW-0687">Ribonucleoprotein</keyword>
<keyword id="KW-0689">Ribosomal protein</keyword>
<keyword id="KW-0694">RNA-binding</keyword>
<keyword id="KW-0699">rRNA-binding</keyword>
<geneLocation type="chloroplast"/>
<organism>
    <name type="scientific">Amborella trichopoda</name>
    <dbReference type="NCBI Taxonomy" id="13333"/>
    <lineage>
        <taxon>Eukaryota</taxon>
        <taxon>Viridiplantae</taxon>
        <taxon>Streptophyta</taxon>
        <taxon>Embryophyta</taxon>
        <taxon>Tracheophyta</taxon>
        <taxon>Spermatophyta</taxon>
        <taxon>Magnoliopsida</taxon>
        <taxon>Amborellales</taxon>
        <taxon>Amborellaceae</taxon>
        <taxon>Amborella</taxon>
    </lineage>
</organism>
<feature type="chain" id="PRO_0000125294" description="Large ribosomal subunit protein uL22c">
    <location>
        <begin position="1"/>
        <end position="124"/>
    </location>
</feature>
<gene>
    <name type="primary">rpl22</name>
</gene>
<sequence>MINKISGTEIRALAKHICMSPHKARRVIDQIRGCSYEQTLMILELMPYRVCYPVFKLVYSAAANASHNMGLNEADSFISKAEVHGGAMMKKFKPKARGRSYPIKRPTCHITIVLKERKKSPLVV</sequence>
<reference key="1">
    <citation type="journal article" date="2003" name="Mol. Biol. Evol.">
        <title>Analysis of the Amborella trichopoda chloroplast genome sequence suggests that Amborella is not a basal angiosperm.</title>
        <authorList>
            <person name="Goremykin V.V."/>
            <person name="Hirsch-Ernst K.I."/>
            <person name="Wolfl S."/>
            <person name="Hellwig F.H."/>
        </authorList>
    </citation>
    <scope>NUCLEOTIDE SEQUENCE [LARGE SCALE GENOMIC DNA]</scope>
</reference>
<name>RK22_AMBTC</name>